<feature type="chain" id="PRO_1000000922" description="Adenylosuccinate synthetase">
    <location>
        <begin position="1"/>
        <end position="432"/>
    </location>
</feature>
<feature type="active site" description="Proton acceptor" evidence="1">
    <location>
        <position position="14"/>
    </location>
</feature>
<feature type="active site" description="Proton donor" evidence="1">
    <location>
        <position position="42"/>
    </location>
</feature>
<feature type="binding site" evidence="1">
    <location>
        <begin position="13"/>
        <end position="19"/>
    </location>
    <ligand>
        <name>GTP</name>
        <dbReference type="ChEBI" id="CHEBI:37565"/>
    </ligand>
</feature>
<feature type="binding site" description="in other chain" evidence="1">
    <location>
        <begin position="14"/>
        <end position="17"/>
    </location>
    <ligand>
        <name>IMP</name>
        <dbReference type="ChEBI" id="CHEBI:58053"/>
        <note>ligand shared between dimeric partners</note>
    </ligand>
</feature>
<feature type="binding site" evidence="1">
    <location>
        <position position="14"/>
    </location>
    <ligand>
        <name>Mg(2+)</name>
        <dbReference type="ChEBI" id="CHEBI:18420"/>
    </ligand>
</feature>
<feature type="binding site" description="in other chain" evidence="1">
    <location>
        <begin position="39"/>
        <end position="42"/>
    </location>
    <ligand>
        <name>IMP</name>
        <dbReference type="ChEBI" id="CHEBI:58053"/>
        <note>ligand shared between dimeric partners</note>
    </ligand>
</feature>
<feature type="binding site" evidence="1">
    <location>
        <begin position="41"/>
        <end position="43"/>
    </location>
    <ligand>
        <name>GTP</name>
        <dbReference type="ChEBI" id="CHEBI:37565"/>
    </ligand>
</feature>
<feature type="binding site" evidence="1">
    <location>
        <position position="41"/>
    </location>
    <ligand>
        <name>Mg(2+)</name>
        <dbReference type="ChEBI" id="CHEBI:18420"/>
    </ligand>
</feature>
<feature type="binding site" description="in other chain" evidence="1">
    <location>
        <position position="130"/>
    </location>
    <ligand>
        <name>IMP</name>
        <dbReference type="ChEBI" id="CHEBI:58053"/>
        <note>ligand shared between dimeric partners</note>
    </ligand>
</feature>
<feature type="binding site" evidence="1">
    <location>
        <position position="144"/>
    </location>
    <ligand>
        <name>IMP</name>
        <dbReference type="ChEBI" id="CHEBI:58053"/>
        <note>ligand shared between dimeric partners</note>
    </ligand>
</feature>
<feature type="binding site" description="in other chain" evidence="1">
    <location>
        <position position="225"/>
    </location>
    <ligand>
        <name>IMP</name>
        <dbReference type="ChEBI" id="CHEBI:58053"/>
        <note>ligand shared between dimeric partners</note>
    </ligand>
</feature>
<feature type="binding site" description="in other chain" evidence="1">
    <location>
        <position position="240"/>
    </location>
    <ligand>
        <name>IMP</name>
        <dbReference type="ChEBI" id="CHEBI:58053"/>
        <note>ligand shared between dimeric partners</note>
    </ligand>
</feature>
<feature type="binding site" evidence="1">
    <location>
        <begin position="300"/>
        <end position="306"/>
    </location>
    <ligand>
        <name>substrate</name>
    </ligand>
</feature>
<feature type="binding site" description="in other chain" evidence="1">
    <location>
        <position position="304"/>
    </location>
    <ligand>
        <name>IMP</name>
        <dbReference type="ChEBI" id="CHEBI:58053"/>
        <note>ligand shared between dimeric partners</note>
    </ligand>
</feature>
<feature type="binding site" evidence="1">
    <location>
        <position position="306"/>
    </location>
    <ligand>
        <name>GTP</name>
        <dbReference type="ChEBI" id="CHEBI:37565"/>
    </ligand>
</feature>
<feature type="binding site" evidence="1">
    <location>
        <begin position="332"/>
        <end position="334"/>
    </location>
    <ligand>
        <name>GTP</name>
        <dbReference type="ChEBI" id="CHEBI:37565"/>
    </ligand>
</feature>
<feature type="binding site" evidence="1">
    <location>
        <begin position="415"/>
        <end position="417"/>
    </location>
    <ligand>
        <name>GTP</name>
        <dbReference type="ChEBI" id="CHEBI:37565"/>
    </ligand>
</feature>
<reference key="1">
    <citation type="journal article" date="2006" name="Genome Res.">
        <title>Massive genome erosion and functional adaptations provide insights into the symbiotic lifestyle of Sodalis glossinidius in the tsetse host.</title>
        <authorList>
            <person name="Toh H."/>
            <person name="Weiss B.L."/>
            <person name="Perkin S.A.H."/>
            <person name="Yamashita A."/>
            <person name="Oshima K."/>
            <person name="Hattori M."/>
            <person name="Aksoy S."/>
        </authorList>
    </citation>
    <scope>NUCLEOTIDE SEQUENCE [LARGE SCALE GENOMIC DNA]</scope>
    <source>
        <strain>morsitans</strain>
    </source>
</reference>
<organism>
    <name type="scientific">Sodalis glossinidius (strain morsitans)</name>
    <dbReference type="NCBI Taxonomy" id="343509"/>
    <lineage>
        <taxon>Bacteria</taxon>
        <taxon>Pseudomonadati</taxon>
        <taxon>Pseudomonadota</taxon>
        <taxon>Gammaproteobacteria</taxon>
        <taxon>Enterobacterales</taxon>
        <taxon>Bruguierivoracaceae</taxon>
        <taxon>Sodalis</taxon>
    </lineage>
</organism>
<keyword id="KW-0963">Cytoplasm</keyword>
<keyword id="KW-0342">GTP-binding</keyword>
<keyword id="KW-0436">Ligase</keyword>
<keyword id="KW-0460">Magnesium</keyword>
<keyword id="KW-0479">Metal-binding</keyword>
<keyword id="KW-0547">Nucleotide-binding</keyword>
<keyword id="KW-0658">Purine biosynthesis</keyword>
<proteinExistence type="inferred from homology"/>
<comment type="function">
    <text evidence="1">Plays an important role in the de novo pathway of purine nucleotide biosynthesis. Catalyzes the first committed step in the biosynthesis of AMP from IMP.</text>
</comment>
<comment type="catalytic activity">
    <reaction evidence="1">
        <text>IMP + L-aspartate + GTP = N(6)-(1,2-dicarboxyethyl)-AMP + GDP + phosphate + 2 H(+)</text>
        <dbReference type="Rhea" id="RHEA:15753"/>
        <dbReference type="ChEBI" id="CHEBI:15378"/>
        <dbReference type="ChEBI" id="CHEBI:29991"/>
        <dbReference type="ChEBI" id="CHEBI:37565"/>
        <dbReference type="ChEBI" id="CHEBI:43474"/>
        <dbReference type="ChEBI" id="CHEBI:57567"/>
        <dbReference type="ChEBI" id="CHEBI:58053"/>
        <dbReference type="ChEBI" id="CHEBI:58189"/>
        <dbReference type="EC" id="6.3.4.4"/>
    </reaction>
</comment>
<comment type="cofactor">
    <cofactor evidence="1">
        <name>Mg(2+)</name>
        <dbReference type="ChEBI" id="CHEBI:18420"/>
    </cofactor>
    <text evidence="1">Binds 1 Mg(2+) ion per subunit.</text>
</comment>
<comment type="pathway">
    <text evidence="1">Purine metabolism; AMP biosynthesis via de novo pathway; AMP from IMP: step 1/2.</text>
</comment>
<comment type="subunit">
    <text evidence="1">Homodimer.</text>
</comment>
<comment type="subcellular location">
    <subcellularLocation>
        <location evidence="1">Cytoplasm</location>
    </subcellularLocation>
</comment>
<comment type="similarity">
    <text evidence="1">Belongs to the adenylosuccinate synthetase family.</text>
</comment>
<name>PURA_SODGM</name>
<gene>
    <name evidence="1" type="primary">purA</name>
    <name type="ordered locus">SG0342</name>
</gene>
<dbReference type="EC" id="6.3.4.4" evidence="1"/>
<dbReference type="EMBL" id="AP008232">
    <property type="protein sequence ID" value="BAE73617.1"/>
    <property type="molecule type" value="Genomic_DNA"/>
</dbReference>
<dbReference type="RefSeq" id="WP_011410205.1">
    <property type="nucleotide sequence ID" value="NC_007712.1"/>
</dbReference>
<dbReference type="SMR" id="Q2NW58"/>
<dbReference type="STRING" id="343509.SG0342"/>
<dbReference type="KEGG" id="sgl:SG0342"/>
<dbReference type="eggNOG" id="COG0104">
    <property type="taxonomic scope" value="Bacteria"/>
</dbReference>
<dbReference type="HOGENOM" id="CLU_029848_0_0_6"/>
<dbReference type="OrthoDB" id="9807553at2"/>
<dbReference type="UniPathway" id="UPA00075">
    <property type="reaction ID" value="UER00335"/>
</dbReference>
<dbReference type="Proteomes" id="UP000001932">
    <property type="component" value="Chromosome"/>
</dbReference>
<dbReference type="GO" id="GO:0005737">
    <property type="term" value="C:cytoplasm"/>
    <property type="evidence" value="ECO:0007669"/>
    <property type="project" value="UniProtKB-SubCell"/>
</dbReference>
<dbReference type="GO" id="GO:0004019">
    <property type="term" value="F:adenylosuccinate synthase activity"/>
    <property type="evidence" value="ECO:0007669"/>
    <property type="project" value="UniProtKB-UniRule"/>
</dbReference>
<dbReference type="GO" id="GO:0005525">
    <property type="term" value="F:GTP binding"/>
    <property type="evidence" value="ECO:0007669"/>
    <property type="project" value="UniProtKB-UniRule"/>
</dbReference>
<dbReference type="GO" id="GO:0000287">
    <property type="term" value="F:magnesium ion binding"/>
    <property type="evidence" value="ECO:0007669"/>
    <property type="project" value="UniProtKB-UniRule"/>
</dbReference>
<dbReference type="GO" id="GO:0044208">
    <property type="term" value="P:'de novo' AMP biosynthetic process"/>
    <property type="evidence" value="ECO:0007669"/>
    <property type="project" value="UniProtKB-UniRule"/>
</dbReference>
<dbReference type="GO" id="GO:0046040">
    <property type="term" value="P:IMP metabolic process"/>
    <property type="evidence" value="ECO:0007669"/>
    <property type="project" value="TreeGrafter"/>
</dbReference>
<dbReference type="CDD" id="cd03108">
    <property type="entry name" value="AdSS"/>
    <property type="match status" value="1"/>
</dbReference>
<dbReference type="FunFam" id="1.10.300.10:FF:000001">
    <property type="entry name" value="Adenylosuccinate synthetase"/>
    <property type="match status" value="1"/>
</dbReference>
<dbReference type="FunFam" id="3.90.170.10:FF:000001">
    <property type="entry name" value="Adenylosuccinate synthetase"/>
    <property type="match status" value="1"/>
</dbReference>
<dbReference type="Gene3D" id="3.40.440.10">
    <property type="entry name" value="Adenylosuccinate Synthetase, subunit A, domain 1"/>
    <property type="match status" value="1"/>
</dbReference>
<dbReference type="Gene3D" id="1.10.300.10">
    <property type="entry name" value="Adenylosuccinate Synthetase, subunit A, domain 2"/>
    <property type="match status" value="1"/>
</dbReference>
<dbReference type="Gene3D" id="3.90.170.10">
    <property type="entry name" value="Adenylosuccinate Synthetase, subunit A, domain 3"/>
    <property type="match status" value="1"/>
</dbReference>
<dbReference type="HAMAP" id="MF_00011">
    <property type="entry name" value="Adenylosucc_synth"/>
    <property type="match status" value="1"/>
</dbReference>
<dbReference type="InterPro" id="IPR018220">
    <property type="entry name" value="Adenylosuccin_syn_GTP-bd"/>
</dbReference>
<dbReference type="InterPro" id="IPR033128">
    <property type="entry name" value="Adenylosuccin_syn_Lys_AS"/>
</dbReference>
<dbReference type="InterPro" id="IPR042109">
    <property type="entry name" value="Adenylosuccinate_synth_dom1"/>
</dbReference>
<dbReference type="InterPro" id="IPR042110">
    <property type="entry name" value="Adenylosuccinate_synth_dom2"/>
</dbReference>
<dbReference type="InterPro" id="IPR042111">
    <property type="entry name" value="Adenylosuccinate_synth_dom3"/>
</dbReference>
<dbReference type="InterPro" id="IPR001114">
    <property type="entry name" value="Adenylosuccinate_synthetase"/>
</dbReference>
<dbReference type="InterPro" id="IPR027417">
    <property type="entry name" value="P-loop_NTPase"/>
</dbReference>
<dbReference type="NCBIfam" id="NF002223">
    <property type="entry name" value="PRK01117.1"/>
    <property type="match status" value="1"/>
</dbReference>
<dbReference type="NCBIfam" id="TIGR00184">
    <property type="entry name" value="purA"/>
    <property type="match status" value="1"/>
</dbReference>
<dbReference type="PANTHER" id="PTHR11846">
    <property type="entry name" value="ADENYLOSUCCINATE SYNTHETASE"/>
    <property type="match status" value="1"/>
</dbReference>
<dbReference type="PANTHER" id="PTHR11846:SF0">
    <property type="entry name" value="ADENYLOSUCCINATE SYNTHETASE"/>
    <property type="match status" value="1"/>
</dbReference>
<dbReference type="Pfam" id="PF00709">
    <property type="entry name" value="Adenylsucc_synt"/>
    <property type="match status" value="1"/>
</dbReference>
<dbReference type="SMART" id="SM00788">
    <property type="entry name" value="Adenylsucc_synt"/>
    <property type="match status" value="1"/>
</dbReference>
<dbReference type="SUPFAM" id="SSF52540">
    <property type="entry name" value="P-loop containing nucleoside triphosphate hydrolases"/>
    <property type="match status" value="1"/>
</dbReference>
<dbReference type="PROSITE" id="PS01266">
    <property type="entry name" value="ADENYLOSUCCIN_SYN_1"/>
    <property type="match status" value="1"/>
</dbReference>
<dbReference type="PROSITE" id="PS00513">
    <property type="entry name" value="ADENYLOSUCCIN_SYN_2"/>
    <property type="match status" value="1"/>
</dbReference>
<sequence>MGKNVVVLGTQWGDEGKGKVVDLLTERAKYVVRYQGGHNAGHTLVINGEKTVLHLIPSGILRENVVSIIANGVVLSPEALMKEMGELEARGIPVRERMLISEACPLILAYHVAMDVAREKARGAKAIGTTGRGIGPAYEDKVARRALRVGDLFNKDTFATKLKEVVDYYNFQLVHYYQADTVDYQMVLDDILAVAYVLTGMVVDVSELLDSARKRGDLMMFEGAQGTLLDIDHGTYPYVTSSNTTAGGVATGSGLGPRYVDYVLGIVKAYSTRVGAGPFPTELFDDTGEFLCVKGNEFGATTGRRRRTGWLDAVAVRRAVQINSLSGFCLTKLDVLDGLQEVKICTAYRLPDGRVVESTPLAAENWEGIEPIYESMPGWSESTFGVKAFDKLPEAARRYIKRIEEVTGVPVDIVSTGPDRSETMILRDPFDA</sequence>
<evidence type="ECO:0000255" key="1">
    <source>
        <dbReference type="HAMAP-Rule" id="MF_00011"/>
    </source>
</evidence>
<protein>
    <recommendedName>
        <fullName evidence="1">Adenylosuccinate synthetase</fullName>
        <shortName evidence="1">AMPSase</shortName>
        <shortName evidence="1">AdSS</shortName>
        <ecNumber evidence="1">6.3.4.4</ecNumber>
    </recommendedName>
    <alternativeName>
        <fullName evidence="1">IMP--aspartate ligase</fullName>
    </alternativeName>
</protein>
<accession>Q2NW58</accession>